<reference key="1">
    <citation type="journal article" date="2004" name="Proc. Natl. Acad. Sci. U.S.A.">
        <title>Complete genomes of two clinical Staphylococcus aureus strains: evidence for the rapid evolution of virulence and drug resistance.</title>
        <authorList>
            <person name="Holden M.T.G."/>
            <person name="Feil E.J."/>
            <person name="Lindsay J.A."/>
            <person name="Peacock S.J."/>
            <person name="Day N.P.J."/>
            <person name="Enright M.C."/>
            <person name="Foster T.J."/>
            <person name="Moore C.E."/>
            <person name="Hurst L."/>
            <person name="Atkin R."/>
            <person name="Barron A."/>
            <person name="Bason N."/>
            <person name="Bentley S.D."/>
            <person name="Chillingworth C."/>
            <person name="Chillingworth T."/>
            <person name="Churcher C."/>
            <person name="Clark L."/>
            <person name="Corton C."/>
            <person name="Cronin A."/>
            <person name="Doggett J."/>
            <person name="Dowd L."/>
            <person name="Feltwell T."/>
            <person name="Hance Z."/>
            <person name="Harris B."/>
            <person name="Hauser H."/>
            <person name="Holroyd S."/>
            <person name="Jagels K."/>
            <person name="James K.D."/>
            <person name="Lennard N."/>
            <person name="Line A."/>
            <person name="Mayes R."/>
            <person name="Moule S."/>
            <person name="Mungall K."/>
            <person name="Ormond D."/>
            <person name="Quail M.A."/>
            <person name="Rabbinowitsch E."/>
            <person name="Rutherford K.M."/>
            <person name="Sanders M."/>
            <person name="Sharp S."/>
            <person name="Simmonds M."/>
            <person name="Stevens K."/>
            <person name="Whitehead S."/>
            <person name="Barrell B.G."/>
            <person name="Spratt B.G."/>
            <person name="Parkhill J."/>
        </authorList>
    </citation>
    <scope>NUCLEOTIDE SEQUENCE [LARGE SCALE GENOMIC DNA]</scope>
    <source>
        <strain>MRSA252</strain>
    </source>
</reference>
<gene>
    <name evidence="1" type="primary">dinB</name>
    <name type="ordered locus">SAR1986</name>
</gene>
<feature type="chain" id="PRO_0000173946" description="DNA polymerase IV">
    <location>
        <begin position="1"/>
        <end position="356"/>
    </location>
</feature>
<feature type="domain" description="UmuC" evidence="1">
    <location>
        <begin position="6"/>
        <end position="187"/>
    </location>
</feature>
<feature type="active site" evidence="1">
    <location>
        <position position="106"/>
    </location>
</feature>
<feature type="binding site" evidence="1">
    <location>
        <position position="10"/>
    </location>
    <ligand>
        <name>Mg(2+)</name>
        <dbReference type="ChEBI" id="CHEBI:18420"/>
    </ligand>
</feature>
<feature type="binding site" evidence="1">
    <location>
        <position position="105"/>
    </location>
    <ligand>
        <name>Mg(2+)</name>
        <dbReference type="ChEBI" id="CHEBI:18420"/>
    </ligand>
</feature>
<feature type="site" description="Substrate discrimination" evidence="1">
    <location>
        <position position="15"/>
    </location>
</feature>
<proteinExistence type="inferred from homology"/>
<dbReference type="EC" id="2.7.7.7" evidence="1"/>
<dbReference type="EMBL" id="BX571856">
    <property type="protein sequence ID" value="CAG40972.1"/>
    <property type="molecule type" value="Genomic_DNA"/>
</dbReference>
<dbReference type="RefSeq" id="WP_000140179.1">
    <property type="nucleotide sequence ID" value="NC_002952.2"/>
</dbReference>
<dbReference type="SMR" id="Q6GFG2"/>
<dbReference type="KEGG" id="sar:SAR1986"/>
<dbReference type="HOGENOM" id="CLU_012348_1_2_9"/>
<dbReference type="Proteomes" id="UP000000596">
    <property type="component" value="Chromosome"/>
</dbReference>
<dbReference type="GO" id="GO:0005829">
    <property type="term" value="C:cytosol"/>
    <property type="evidence" value="ECO:0007669"/>
    <property type="project" value="TreeGrafter"/>
</dbReference>
<dbReference type="GO" id="GO:0003684">
    <property type="term" value="F:damaged DNA binding"/>
    <property type="evidence" value="ECO:0007669"/>
    <property type="project" value="InterPro"/>
</dbReference>
<dbReference type="GO" id="GO:0003887">
    <property type="term" value="F:DNA-directed DNA polymerase activity"/>
    <property type="evidence" value="ECO:0007669"/>
    <property type="project" value="UniProtKB-UniRule"/>
</dbReference>
<dbReference type="GO" id="GO:0000287">
    <property type="term" value="F:magnesium ion binding"/>
    <property type="evidence" value="ECO:0007669"/>
    <property type="project" value="UniProtKB-UniRule"/>
</dbReference>
<dbReference type="GO" id="GO:0006261">
    <property type="term" value="P:DNA-templated DNA replication"/>
    <property type="evidence" value="ECO:0007669"/>
    <property type="project" value="UniProtKB-UniRule"/>
</dbReference>
<dbReference type="GO" id="GO:0042276">
    <property type="term" value="P:error-prone translesion synthesis"/>
    <property type="evidence" value="ECO:0007669"/>
    <property type="project" value="TreeGrafter"/>
</dbReference>
<dbReference type="GO" id="GO:0009432">
    <property type="term" value="P:SOS response"/>
    <property type="evidence" value="ECO:0007669"/>
    <property type="project" value="TreeGrafter"/>
</dbReference>
<dbReference type="CDD" id="cd03586">
    <property type="entry name" value="PolY_Pol_IV_kappa"/>
    <property type="match status" value="1"/>
</dbReference>
<dbReference type="FunFam" id="3.30.1490.100:FF:000004">
    <property type="entry name" value="DNA polymerase IV"/>
    <property type="match status" value="1"/>
</dbReference>
<dbReference type="FunFam" id="3.40.1170.60:FF:000001">
    <property type="entry name" value="DNA polymerase IV"/>
    <property type="match status" value="1"/>
</dbReference>
<dbReference type="Gene3D" id="3.30.70.270">
    <property type="match status" value="1"/>
</dbReference>
<dbReference type="Gene3D" id="3.40.1170.60">
    <property type="match status" value="1"/>
</dbReference>
<dbReference type="Gene3D" id="1.10.150.20">
    <property type="entry name" value="5' to 3' exonuclease, C-terminal subdomain"/>
    <property type="match status" value="1"/>
</dbReference>
<dbReference type="Gene3D" id="3.30.1490.100">
    <property type="entry name" value="DNA polymerase, Y-family, little finger domain"/>
    <property type="match status" value="1"/>
</dbReference>
<dbReference type="HAMAP" id="MF_01113">
    <property type="entry name" value="DNApol_IV"/>
    <property type="match status" value="1"/>
</dbReference>
<dbReference type="InterPro" id="IPR043502">
    <property type="entry name" value="DNA/RNA_pol_sf"/>
</dbReference>
<dbReference type="InterPro" id="IPR036775">
    <property type="entry name" value="DNA_pol_Y-fam_lit_finger_sf"/>
</dbReference>
<dbReference type="InterPro" id="IPR017961">
    <property type="entry name" value="DNA_pol_Y-fam_little_finger"/>
</dbReference>
<dbReference type="InterPro" id="IPR050116">
    <property type="entry name" value="DNA_polymerase-Y"/>
</dbReference>
<dbReference type="InterPro" id="IPR022880">
    <property type="entry name" value="DNApol_IV"/>
</dbReference>
<dbReference type="InterPro" id="IPR043128">
    <property type="entry name" value="Rev_trsase/Diguanyl_cyclase"/>
</dbReference>
<dbReference type="InterPro" id="IPR001126">
    <property type="entry name" value="UmuC"/>
</dbReference>
<dbReference type="NCBIfam" id="NF002677">
    <property type="entry name" value="PRK02406.1"/>
    <property type="match status" value="1"/>
</dbReference>
<dbReference type="NCBIfam" id="NF010731">
    <property type="entry name" value="PRK14133.1"/>
    <property type="match status" value="1"/>
</dbReference>
<dbReference type="PANTHER" id="PTHR11076:SF33">
    <property type="entry name" value="DNA POLYMERASE KAPPA"/>
    <property type="match status" value="1"/>
</dbReference>
<dbReference type="PANTHER" id="PTHR11076">
    <property type="entry name" value="DNA REPAIR POLYMERASE UMUC / TRANSFERASE FAMILY MEMBER"/>
    <property type="match status" value="1"/>
</dbReference>
<dbReference type="Pfam" id="PF00817">
    <property type="entry name" value="IMS"/>
    <property type="match status" value="1"/>
</dbReference>
<dbReference type="Pfam" id="PF11799">
    <property type="entry name" value="IMS_C"/>
    <property type="match status" value="1"/>
</dbReference>
<dbReference type="SUPFAM" id="SSF56672">
    <property type="entry name" value="DNA/RNA polymerases"/>
    <property type="match status" value="1"/>
</dbReference>
<dbReference type="SUPFAM" id="SSF100879">
    <property type="entry name" value="Lesion bypass DNA polymerase (Y-family), little finger domain"/>
    <property type="match status" value="1"/>
</dbReference>
<dbReference type="PROSITE" id="PS50173">
    <property type="entry name" value="UMUC"/>
    <property type="match status" value="1"/>
</dbReference>
<comment type="function">
    <text evidence="1">Poorly processive, error-prone DNA polymerase involved in untargeted mutagenesis. Copies undamaged DNA at stalled replication forks, which arise in vivo from mismatched or misaligned primer ends. These misaligned primers can be extended by PolIV. Exhibits no 3'-5' exonuclease (proofreading) activity. May be involved in translesional synthesis, in conjunction with the beta clamp from PolIII.</text>
</comment>
<comment type="catalytic activity">
    <reaction evidence="1">
        <text>DNA(n) + a 2'-deoxyribonucleoside 5'-triphosphate = DNA(n+1) + diphosphate</text>
        <dbReference type="Rhea" id="RHEA:22508"/>
        <dbReference type="Rhea" id="RHEA-COMP:17339"/>
        <dbReference type="Rhea" id="RHEA-COMP:17340"/>
        <dbReference type="ChEBI" id="CHEBI:33019"/>
        <dbReference type="ChEBI" id="CHEBI:61560"/>
        <dbReference type="ChEBI" id="CHEBI:173112"/>
        <dbReference type="EC" id="2.7.7.7"/>
    </reaction>
</comment>
<comment type="cofactor">
    <cofactor evidence="1">
        <name>Mg(2+)</name>
        <dbReference type="ChEBI" id="CHEBI:18420"/>
    </cofactor>
    <text evidence="1">Binds 2 magnesium ions per subunit.</text>
</comment>
<comment type="subunit">
    <text evidence="1">Monomer.</text>
</comment>
<comment type="subcellular location">
    <subcellularLocation>
        <location evidence="1">Cytoplasm</location>
    </subcellularLocation>
</comment>
<comment type="similarity">
    <text evidence="1">Belongs to the DNA polymerase type-Y family.</text>
</comment>
<keyword id="KW-0963">Cytoplasm</keyword>
<keyword id="KW-0227">DNA damage</keyword>
<keyword id="KW-0234">DNA repair</keyword>
<keyword id="KW-0235">DNA replication</keyword>
<keyword id="KW-0238">DNA-binding</keyword>
<keyword id="KW-0239">DNA-directed DNA polymerase</keyword>
<keyword id="KW-0460">Magnesium</keyword>
<keyword id="KW-0479">Metal-binding</keyword>
<keyword id="KW-0515">Mutator protein</keyword>
<keyword id="KW-0548">Nucleotidyltransferase</keyword>
<keyword id="KW-0808">Transferase</keyword>
<sequence length="356" mass="40357">MTERRIIHIDMDYFFAQVEMRDNPKLKGKPVIVGGKASSRGVVSTASYEARKYGVHSAMPMSQAHKLCPNGYFVTSNFGAYRETSAQIMSIFRSYTDKVEPMSLDEAYLDITELVRPDLPASKIAQYIRKDILEQTHLTASAGVSYNKFLAKLASGMNKPDGMTVIDYRNVHDILMTLDIGDFPGVGKASKKVMHDNGIFNGRDLYEKTEFELIRLFGKRGRGLYNKARGIDHSEVKSTRVRKSVGTERTFATDVNDDEEILRKVWELSGKTAERLNKLQKSAKTVTVKIKTYQFETLSKQMSLRDSVSSEEDIYNIAYLLYNDLKDPDVPIRLIGVTVGNLEQSTYKNMTIYDFI</sequence>
<accession>Q6GFG2</accession>
<evidence type="ECO:0000255" key="1">
    <source>
        <dbReference type="HAMAP-Rule" id="MF_01113"/>
    </source>
</evidence>
<organism>
    <name type="scientific">Staphylococcus aureus (strain MRSA252)</name>
    <dbReference type="NCBI Taxonomy" id="282458"/>
    <lineage>
        <taxon>Bacteria</taxon>
        <taxon>Bacillati</taxon>
        <taxon>Bacillota</taxon>
        <taxon>Bacilli</taxon>
        <taxon>Bacillales</taxon>
        <taxon>Staphylococcaceae</taxon>
        <taxon>Staphylococcus</taxon>
    </lineage>
</organism>
<protein>
    <recommendedName>
        <fullName evidence="1">DNA polymerase IV</fullName>
        <shortName evidence="1">Pol IV</shortName>
        <ecNumber evidence="1">2.7.7.7</ecNumber>
    </recommendedName>
</protein>
<name>DPO4_STAAR</name>